<keyword id="KW-0004">4Fe-4S</keyword>
<keyword id="KW-0963">Cytoplasm</keyword>
<keyword id="KW-1015">Disulfide bond</keyword>
<keyword id="KW-0408">Iron</keyword>
<keyword id="KW-0411">Iron-sulfur</keyword>
<keyword id="KW-0479">Metal-binding</keyword>
<keyword id="KW-0489">Methyltransferase</keyword>
<keyword id="KW-1185">Reference proteome</keyword>
<keyword id="KW-0949">S-adenosyl-L-methionine</keyword>
<keyword id="KW-0808">Transferase</keyword>
<gene>
    <name type="ordered locus">Anae109_4379</name>
</gene>
<proteinExistence type="inferred from homology"/>
<comment type="cofactor">
    <cofactor evidence="1">
        <name>[4Fe-4S] cluster</name>
        <dbReference type="ChEBI" id="CHEBI:49883"/>
    </cofactor>
    <text evidence="1">Binds 1 [4Fe-4S] cluster. The cluster is coordinated with 3 cysteines and an exchangeable S-adenosyl-L-methionine.</text>
</comment>
<comment type="subcellular location">
    <subcellularLocation>
        <location evidence="4">Cytoplasm</location>
    </subcellularLocation>
</comment>
<comment type="similarity">
    <text evidence="4">Belongs to the radical SAM superfamily. RlmN family.</text>
</comment>
<feature type="chain" id="PRO_0000350017" description="Probable RNA methyltransferase Anae109_4379">
    <location>
        <begin position="1"/>
        <end position="336"/>
    </location>
</feature>
<feature type="domain" description="Radical SAM core" evidence="3">
    <location>
        <begin position="93"/>
        <end position="322"/>
    </location>
</feature>
<feature type="active site" description="Proton acceptor" evidence="2">
    <location>
        <position position="86"/>
    </location>
</feature>
<feature type="active site" description="S-methylcysteine intermediate" evidence="1">
    <location>
        <position position="328"/>
    </location>
</feature>
<feature type="binding site" evidence="1">
    <location>
        <position position="107"/>
    </location>
    <ligand>
        <name>[4Fe-4S] cluster</name>
        <dbReference type="ChEBI" id="CHEBI:49883"/>
        <note>4Fe-4S-S-AdoMet</note>
    </ligand>
</feature>
<feature type="binding site" evidence="1">
    <location>
        <position position="111"/>
    </location>
    <ligand>
        <name>[4Fe-4S] cluster</name>
        <dbReference type="ChEBI" id="CHEBI:49883"/>
        <note>4Fe-4S-S-AdoMet</note>
    </ligand>
</feature>
<feature type="binding site" evidence="1">
    <location>
        <position position="114"/>
    </location>
    <ligand>
        <name>[4Fe-4S] cluster</name>
        <dbReference type="ChEBI" id="CHEBI:49883"/>
        <note>4Fe-4S-S-AdoMet</note>
    </ligand>
</feature>
<feature type="binding site" evidence="1">
    <location>
        <begin position="154"/>
        <end position="155"/>
    </location>
    <ligand>
        <name>S-adenosyl-L-methionine</name>
        <dbReference type="ChEBI" id="CHEBI:59789"/>
    </ligand>
</feature>
<feature type="binding site" evidence="1">
    <location>
        <position position="186"/>
    </location>
    <ligand>
        <name>S-adenosyl-L-methionine</name>
        <dbReference type="ChEBI" id="CHEBI:59789"/>
    </ligand>
</feature>
<feature type="binding site" evidence="1">
    <location>
        <begin position="209"/>
        <end position="211"/>
    </location>
    <ligand>
        <name>S-adenosyl-L-methionine</name>
        <dbReference type="ChEBI" id="CHEBI:59789"/>
    </ligand>
</feature>
<feature type="disulfide bond" description="(transient)" evidence="1">
    <location>
        <begin position="100"/>
        <end position="328"/>
    </location>
</feature>
<evidence type="ECO:0000250" key="1"/>
<evidence type="ECO:0000255" key="2"/>
<evidence type="ECO:0000255" key="3">
    <source>
        <dbReference type="PROSITE-ProRule" id="PRU01266"/>
    </source>
</evidence>
<evidence type="ECO:0000305" key="4"/>
<name>Y4379_ANADF</name>
<accession>A7HIL1</accession>
<reference key="1">
    <citation type="journal article" date="2015" name="Genome Announc.">
        <title>Complete genome sequence of Anaeromyxobacter sp. Fw109-5, an anaerobic, metal-reducing bacterium isolated from a contaminated subsurface environment.</title>
        <authorList>
            <person name="Hwang C."/>
            <person name="Copeland A."/>
            <person name="Lucas S."/>
            <person name="Lapidus A."/>
            <person name="Barry K."/>
            <person name="Glavina Del Rio T."/>
            <person name="Dalin E."/>
            <person name="Tice H."/>
            <person name="Pitluck S."/>
            <person name="Sims D."/>
            <person name="Brettin T."/>
            <person name="Bruce D.C."/>
            <person name="Detter J.C."/>
            <person name="Han C.S."/>
            <person name="Schmutz J."/>
            <person name="Larimer F.W."/>
            <person name="Land M.L."/>
            <person name="Hauser L.J."/>
            <person name="Kyrpides N."/>
            <person name="Lykidis A."/>
            <person name="Richardson P."/>
            <person name="Belieav A."/>
            <person name="Sanford R.A."/>
            <person name="Loeffler F.E."/>
            <person name="Fields M.W."/>
        </authorList>
    </citation>
    <scope>NUCLEOTIDE SEQUENCE [LARGE SCALE GENOMIC DNA]</scope>
    <source>
        <strain>Fw109-5</strain>
    </source>
</reference>
<sequence length="336" mass="36414">MLHLLGQDSRALARKAGISLEDARRITGAVIGRGAPLRSARNVRRAVLDRVEALATPGELRRVACTDAKDGFRRYLLELGDGARVEAVRIPLFDTHHTVCLSSQAGCALGCSFCATGALGLARSLRAWEIVAQLLHVRADSTRPITGVVFMGQGEPFLNYDAVLEAAYTLCDPAGGRIDGRRISISTAGVVPMIRRYTAEGHKFRLCVSLNAAIPWKRRALMPIEEGFPLDELVDAVREHAAQRGRVTLEYVMIAGVNTGDEDAAALGRLLAGIPVRLNPIAVNDATGRHRPPDEAEWNAFRDALARELPGQPIVRRYSGGQDEHAACGMLSSRTR</sequence>
<dbReference type="EC" id="2.1.1.-"/>
<dbReference type="EMBL" id="CP000769">
    <property type="protein sequence ID" value="ABS28557.1"/>
    <property type="molecule type" value="Genomic_DNA"/>
</dbReference>
<dbReference type="RefSeq" id="WP_012099202.1">
    <property type="nucleotide sequence ID" value="NC_009675.1"/>
</dbReference>
<dbReference type="SMR" id="A7HIL1"/>
<dbReference type="STRING" id="404589.Anae109_4379"/>
<dbReference type="KEGG" id="afw:Anae109_4379"/>
<dbReference type="eggNOG" id="COG0820">
    <property type="taxonomic scope" value="Bacteria"/>
</dbReference>
<dbReference type="HOGENOM" id="CLU_029101_2_0_7"/>
<dbReference type="OrthoDB" id="9793973at2"/>
<dbReference type="Proteomes" id="UP000006382">
    <property type="component" value="Chromosome"/>
</dbReference>
<dbReference type="GO" id="GO:0005737">
    <property type="term" value="C:cytoplasm"/>
    <property type="evidence" value="ECO:0007669"/>
    <property type="project" value="UniProtKB-SubCell"/>
</dbReference>
<dbReference type="GO" id="GO:0051539">
    <property type="term" value="F:4 iron, 4 sulfur cluster binding"/>
    <property type="evidence" value="ECO:0007669"/>
    <property type="project" value="UniProtKB-KW"/>
</dbReference>
<dbReference type="GO" id="GO:0046872">
    <property type="term" value="F:metal ion binding"/>
    <property type="evidence" value="ECO:0007669"/>
    <property type="project" value="UniProtKB-KW"/>
</dbReference>
<dbReference type="GO" id="GO:0008173">
    <property type="term" value="F:RNA methyltransferase activity"/>
    <property type="evidence" value="ECO:0007669"/>
    <property type="project" value="InterPro"/>
</dbReference>
<dbReference type="GO" id="GO:0070475">
    <property type="term" value="P:rRNA base methylation"/>
    <property type="evidence" value="ECO:0007669"/>
    <property type="project" value="TreeGrafter"/>
</dbReference>
<dbReference type="GO" id="GO:0030488">
    <property type="term" value="P:tRNA methylation"/>
    <property type="evidence" value="ECO:0007669"/>
    <property type="project" value="TreeGrafter"/>
</dbReference>
<dbReference type="CDD" id="cd01335">
    <property type="entry name" value="Radical_SAM"/>
    <property type="match status" value="1"/>
</dbReference>
<dbReference type="Gene3D" id="3.20.20.70">
    <property type="entry name" value="Aldolase class I"/>
    <property type="match status" value="1"/>
</dbReference>
<dbReference type="InterPro" id="IPR013785">
    <property type="entry name" value="Aldolase_TIM"/>
</dbReference>
<dbReference type="InterPro" id="IPR040072">
    <property type="entry name" value="Methyltransferase_A"/>
</dbReference>
<dbReference type="InterPro" id="IPR004383">
    <property type="entry name" value="rRNA_lsu_MTrfase_RlmN/Cfr"/>
</dbReference>
<dbReference type="InterPro" id="IPR007197">
    <property type="entry name" value="rSAM"/>
</dbReference>
<dbReference type="NCBIfam" id="NF011040">
    <property type="entry name" value="PRK14470.1"/>
    <property type="match status" value="1"/>
</dbReference>
<dbReference type="PANTHER" id="PTHR30544">
    <property type="entry name" value="23S RRNA METHYLTRANSFERASE"/>
    <property type="match status" value="1"/>
</dbReference>
<dbReference type="PANTHER" id="PTHR30544:SF5">
    <property type="entry name" value="RADICAL SAM CORE DOMAIN-CONTAINING PROTEIN"/>
    <property type="match status" value="1"/>
</dbReference>
<dbReference type="Pfam" id="PF04055">
    <property type="entry name" value="Radical_SAM"/>
    <property type="match status" value="1"/>
</dbReference>
<dbReference type="PIRSF" id="PIRSF006004">
    <property type="entry name" value="CHP00048"/>
    <property type="match status" value="1"/>
</dbReference>
<dbReference type="SFLD" id="SFLDF00275">
    <property type="entry name" value="adenosine_C2_methyltransferase"/>
    <property type="match status" value="1"/>
</dbReference>
<dbReference type="SFLD" id="SFLDS00029">
    <property type="entry name" value="Radical_SAM"/>
    <property type="match status" value="1"/>
</dbReference>
<dbReference type="SUPFAM" id="SSF102114">
    <property type="entry name" value="Radical SAM enzymes"/>
    <property type="match status" value="1"/>
</dbReference>
<dbReference type="PROSITE" id="PS51918">
    <property type="entry name" value="RADICAL_SAM"/>
    <property type="match status" value="1"/>
</dbReference>
<protein>
    <recommendedName>
        <fullName>Probable RNA methyltransferase Anae109_4379</fullName>
        <ecNumber>2.1.1.-</ecNumber>
    </recommendedName>
</protein>
<organism>
    <name type="scientific">Anaeromyxobacter sp. (strain Fw109-5)</name>
    <dbReference type="NCBI Taxonomy" id="404589"/>
    <lineage>
        <taxon>Bacteria</taxon>
        <taxon>Pseudomonadati</taxon>
        <taxon>Myxococcota</taxon>
        <taxon>Myxococcia</taxon>
        <taxon>Myxococcales</taxon>
        <taxon>Cystobacterineae</taxon>
        <taxon>Anaeromyxobacteraceae</taxon>
        <taxon>Anaeromyxobacter</taxon>
    </lineage>
</organism>